<organism>
    <name type="scientific">Borreliella burgdorferi (strain ZS7)</name>
    <name type="common">Borrelia burgdorferi</name>
    <dbReference type="NCBI Taxonomy" id="445985"/>
    <lineage>
        <taxon>Bacteria</taxon>
        <taxon>Pseudomonadati</taxon>
        <taxon>Spirochaetota</taxon>
        <taxon>Spirochaetia</taxon>
        <taxon>Spirochaetales</taxon>
        <taxon>Borreliaceae</taxon>
        <taxon>Borreliella</taxon>
    </lineage>
</organism>
<gene>
    <name evidence="1" type="primary">rpiA</name>
    <name type="ordered locus">BbuZS7_0677</name>
</gene>
<accession>B7J2L2</accession>
<feature type="chain" id="PRO_1000194691" description="Ribose-5-phosphate isomerase A">
    <location>
        <begin position="1"/>
        <end position="228"/>
    </location>
</feature>
<feature type="active site" description="Proton acceptor" evidence="1">
    <location>
        <position position="109"/>
    </location>
</feature>
<feature type="binding site" evidence="1">
    <location>
        <begin position="27"/>
        <end position="30"/>
    </location>
    <ligand>
        <name>substrate</name>
    </ligand>
</feature>
<feature type="binding site" evidence="1">
    <location>
        <begin position="86"/>
        <end position="89"/>
    </location>
    <ligand>
        <name>substrate</name>
    </ligand>
</feature>
<feature type="binding site" evidence="1">
    <location>
        <begin position="100"/>
        <end position="103"/>
    </location>
    <ligand>
        <name>substrate</name>
    </ligand>
</feature>
<feature type="binding site" evidence="1">
    <location>
        <position position="127"/>
    </location>
    <ligand>
        <name>substrate</name>
    </ligand>
</feature>
<proteinExistence type="inferred from homology"/>
<protein>
    <recommendedName>
        <fullName evidence="1">Ribose-5-phosphate isomerase A</fullName>
        <ecNumber evidence="1">5.3.1.6</ecNumber>
    </recommendedName>
    <alternativeName>
        <fullName evidence="1">Phosphoriboisomerase A</fullName>
        <shortName evidence="1">PRI</shortName>
    </alternativeName>
</protein>
<keyword id="KW-0413">Isomerase</keyword>
<reference key="1">
    <citation type="journal article" date="2011" name="J. Bacteriol.">
        <title>Whole-genome sequences of thirteen isolates of Borrelia burgdorferi.</title>
        <authorList>
            <person name="Schutzer S.E."/>
            <person name="Fraser-Liggett C.M."/>
            <person name="Casjens S.R."/>
            <person name="Qiu W.G."/>
            <person name="Dunn J.J."/>
            <person name="Mongodin E.F."/>
            <person name="Luft B.J."/>
        </authorList>
    </citation>
    <scope>NUCLEOTIDE SEQUENCE [LARGE SCALE GENOMIC DNA]</scope>
    <source>
        <strain>ZS7</strain>
    </source>
</reference>
<name>RPIA_BORBZ</name>
<comment type="function">
    <text evidence="1">Catalyzes the reversible conversion of ribose-5-phosphate to ribulose 5-phosphate.</text>
</comment>
<comment type="catalytic activity">
    <reaction evidence="1">
        <text>aldehydo-D-ribose 5-phosphate = D-ribulose 5-phosphate</text>
        <dbReference type="Rhea" id="RHEA:14657"/>
        <dbReference type="ChEBI" id="CHEBI:58121"/>
        <dbReference type="ChEBI" id="CHEBI:58273"/>
        <dbReference type="EC" id="5.3.1.6"/>
    </reaction>
</comment>
<comment type="pathway">
    <text evidence="1">Carbohydrate degradation; pentose phosphate pathway; D-ribose 5-phosphate from D-ribulose 5-phosphate (non-oxidative stage): step 1/1.</text>
</comment>
<comment type="subunit">
    <text evidence="1">Homodimer.</text>
</comment>
<comment type="similarity">
    <text evidence="1">Belongs to the ribose 5-phosphate isomerase family.</text>
</comment>
<evidence type="ECO:0000255" key="1">
    <source>
        <dbReference type="HAMAP-Rule" id="MF_00170"/>
    </source>
</evidence>
<sequence length="228" mass="25911">MENQKILVAKYAIDHYIKSNMNLGIGTGTTIYYAIKYLSEKIKSGSLKNLKFYTTSSDTKYLLSKEQIPYESNFSKLNKNLDIAIDGADEILLEKKSLIKGMGGAHLMEKVIAYNSETLLIIADETKIVKKLGTKMPIPIEVAQNAVGFIMTRLEEMNLEATLRICKEKKGPTITDNNNYILDVKMHVENPEGTEKYFKLFPGILEIGIFNHKNTRIVYYQDKQIKEA</sequence>
<dbReference type="EC" id="5.3.1.6" evidence="1"/>
<dbReference type="EMBL" id="CP001205">
    <property type="protein sequence ID" value="ACK74448.1"/>
    <property type="molecule type" value="Genomic_DNA"/>
</dbReference>
<dbReference type="RefSeq" id="WP_002657373.1">
    <property type="nucleotide sequence ID" value="NC_011728.1"/>
</dbReference>
<dbReference type="SMR" id="B7J2L2"/>
<dbReference type="GeneID" id="56567467"/>
<dbReference type="KEGG" id="bbz:BbuZS7_0677"/>
<dbReference type="HOGENOM" id="CLU_056590_1_1_12"/>
<dbReference type="UniPathway" id="UPA00115">
    <property type="reaction ID" value="UER00412"/>
</dbReference>
<dbReference type="Proteomes" id="UP000006901">
    <property type="component" value="Chromosome"/>
</dbReference>
<dbReference type="GO" id="GO:0005829">
    <property type="term" value="C:cytosol"/>
    <property type="evidence" value="ECO:0007669"/>
    <property type="project" value="TreeGrafter"/>
</dbReference>
<dbReference type="GO" id="GO:0004751">
    <property type="term" value="F:ribose-5-phosphate isomerase activity"/>
    <property type="evidence" value="ECO:0007669"/>
    <property type="project" value="UniProtKB-UniRule"/>
</dbReference>
<dbReference type="GO" id="GO:0006014">
    <property type="term" value="P:D-ribose metabolic process"/>
    <property type="evidence" value="ECO:0007669"/>
    <property type="project" value="TreeGrafter"/>
</dbReference>
<dbReference type="GO" id="GO:0009052">
    <property type="term" value="P:pentose-phosphate shunt, non-oxidative branch"/>
    <property type="evidence" value="ECO:0007669"/>
    <property type="project" value="UniProtKB-UniRule"/>
</dbReference>
<dbReference type="CDD" id="cd01398">
    <property type="entry name" value="RPI_A"/>
    <property type="match status" value="1"/>
</dbReference>
<dbReference type="Gene3D" id="3.30.70.260">
    <property type="match status" value="1"/>
</dbReference>
<dbReference type="Gene3D" id="3.40.50.1360">
    <property type="match status" value="1"/>
</dbReference>
<dbReference type="HAMAP" id="MF_00170">
    <property type="entry name" value="Rib_5P_isom_A"/>
    <property type="match status" value="1"/>
</dbReference>
<dbReference type="InterPro" id="IPR037171">
    <property type="entry name" value="NagB/RpiA_transferase-like"/>
</dbReference>
<dbReference type="InterPro" id="IPR020672">
    <property type="entry name" value="Ribose5P_isomerase_typA_subgr"/>
</dbReference>
<dbReference type="InterPro" id="IPR004788">
    <property type="entry name" value="Ribose5P_isomerase_type_A"/>
</dbReference>
<dbReference type="NCBIfam" id="TIGR00021">
    <property type="entry name" value="rpiA"/>
    <property type="match status" value="1"/>
</dbReference>
<dbReference type="PANTHER" id="PTHR11934">
    <property type="entry name" value="RIBOSE-5-PHOSPHATE ISOMERASE"/>
    <property type="match status" value="1"/>
</dbReference>
<dbReference type="PANTHER" id="PTHR11934:SF0">
    <property type="entry name" value="RIBOSE-5-PHOSPHATE ISOMERASE"/>
    <property type="match status" value="1"/>
</dbReference>
<dbReference type="Pfam" id="PF06026">
    <property type="entry name" value="Rib_5-P_isom_A"/>
    <property type="match status" value="1"/>
</dbReference>
<dbReference type="SUPFAM" id="SSF75445">
    <property type="entry name" value="D-ribose-5-phosphate isomerase (RpiA), lid domain"/>
    <property type="match status" value="1"/>
</dbReference>
<dbReference type="SUPFAM" id="SSF100950">
    <property type="entry name" value="NagB/RpiA/CoA transferase-like"/>
    <property type="match status" value="1"/>
</dbReference>